<reference key="1">
    <citation type="journal article" date="2009" name="PLoS Pathog.">
        <title>Genomic evidence for the evolution of Streptococcus equi: host restriction, increased virulence, and genetic exchange with human pathogens.</title>
        <authorList>
            <person name="Holden M.T.G."/>
            <person name="Heather Z."/>
            <person name="Paillot R."/>
            <person name="Steward K.F."/>
            <person name="Webb K."/>
            <person name="Ainslie F."/>
            <person name="Jourdan T."/>
            <person name="Bason N.C."/>
            <person name="Holroyd N.E."/>
            <person name="Mungall K."/>
            <person name="Quail M.A."/>
            <person name="Sanders M."/>
            <person name="Simmonds M."/>
            <person name="Willey D."/>
            <person name="Brooks K."/>
            <person name="Aanensen D.M."/>
            <person name="Spratt B.G."/>
            <person name="Jolley K.A."/>
            <person name="Maiden M.C.J."/>
            <person name="Kehoe M."/>
            <person name="Chanter N."/>
            <person name="Bentley S.D."/>
            <person name="Robinson C."/>
            <person name="Maskell D.J."/>
            <person name="Parkhill J."/>
            <person name="Waller A.S."/>
        </authorList>
    </citation>
    <scope>NUCLEOTIDE SEQUENCE [LARGE SCALE GENOMIC DNA]</scope>
    <source>
        <strain>4047</strain>
    </source>
</reference>
<evidence type="ECO:0000255" key="1">
    <source>
        <dbReference type="HAMAP-Rule" id="MF_01147"/>
    </source>
</evidence>
<sequence>MINPIAFKLGPLSLHWYAVCILVGLLLAVYLAAKEAPRKKMTSDDIIDFILIAFPLAIIGARIYYVAFEWSYYSQHLSDIFAIWNGGIAIYGGLITGTIVLFVYCYYKVLNPIHFLDIAAPSVMLAQAIGRWGNFFNQEAYGRAVSQLNYLPSFIRQQMFIDGSYRVPTFLYESMWNLIGFVIIMVWRRKPRSLVDGDIISFYLIWYGCGRLVIEGMRTDSLMLLGIRVSQYMSVLLIIIAIVFIFKRHRQKGISYYQE</sequence>
<comment type="function">
    <text evidence="1">Catalyzes the transfer of the diacylglyceryl group from phosphatidylglycerol to the sulfhydryl group of the N-terminal cysteine of a prolipoprotein, the first step in the formation of mature lipoproteins.</text>
</comment>
<comment type="catalytic activity">
    <reaction evidence="1">
        <text>L-cysteinyl-[prolipoprotein] + a 1,2-diacyl-sn-glycero-3-phospho-(1'-sn-glycerol) = an S-1,2-diacyl-sn-glyceryl-L-cysteinyl-[prolipoprotein] + sn-glycerol 1-phosphate + H(+)</text>
        <dbReference type="Rhea" id="RHEA:56712"/>
        <dbReference type="Rhea" id="RHEA-COMP:14679"/>
        <dbReference type="Rhea" id="RHEA-COMP:14680"/>
        <dbReference type="ChEBI" id="CHEBI:15378"/>
        <dbReference type="ChEBI" id="CHEBI:29950"/>
        <dbReference type="ChEBI" id="CHEBI:57685"/>
        <dbReference type="ChEBI" id="CHEBI:64716"/>
        <dbReference type="ChEBI" id="CHEBI:140658"/>
        <dbReference type="EC" id="2.5.1.145"/>
    </reaction>
</comment>
<comment type="pathway">
    <text evidence="1">Protein modification; lipoprotein biosynthesis (diacylglyceryl transfer).</text>
</comment>
<comment type="subcellular location">
    <subcellularLocation>
        <location evidence="1">Cell membrane</location>
        <topology evidence="1">Multi-pass membrane protein</topology>
    </subcellularLocation>
</comment>
<comment type="similarity">
    <text evidence="1">Belongs to the Lgt family.</text>
</comment>
<feature type="chain" id="PRO_1000164149" description="Phosphatidylglycerol--prolipoprotein diacylglyceryl transferase">
    <location>
        <begin position="1"/>
        <end position="259"/>
    </location>
</feature>
<feature type="transmembrane region" description="Helical" evidence="1">
    <location>
        <begin position="12"/>
        <end position="32"/>
    </location>
</feature>
<feature type="transmembrane region" description="Helical" evidence="1">
    <location>
        <begin position="46"/>
        <end position="66"/>
    </location>
</feature>
<feature type="transmembrane region" description="Helical" evidence="1">
    <location>
        <begin position="83"/>
        <end position="103"/>
    </location>
</feature>
<feature type="transmembrane region" description="Helical" evidence="1">
    <location>
        <begin position="109"/>
        <end position="129"/>
    </location>
</feature>
<feature type="transmembrane region" description="Helical" evidence="1">
    <location>
        <begin position="167"/>
        <end position="187"/>
    </location>
</feature>
<feature type="transmembrane region" description="Helical" evidence="1">
    <location>
        <begin position="194"/>
        <end position="214"/>
    </location>
</feature>
<feature type="transmembrane region" description="Helical" evidence="1">
    <location>
        <begin position="226"/>
        <end position="246"/>
    </location>
</feature>
<feature type="binding site" evidence="1">
    <location>
        <position position="131"/>
    </location>
    <ligand>
        <name>a 1,2-diacyl-sn-glycero-3-phospho-(1'-sn-glycerol)</name>
        <dbReference type="ChEBI" id="CHEBI:64716"/>
    </ligand>
</feature>
<proteinExistence type="inferred from homology"/>
<organism>
    <name type="scientific">Streptococcus equi subsp. equi (strain 4047)</name>
    <dbReference type="NCBI Taxonomy" id="553482"/>
    <lineage>
        <taxon>Bacteria</taxon>
        <taxon>Bacillati</taxon>
        <taxon>Bacillota</taxon>
        <taxon>Bacilli</taxon>
        <taxon>Lactobacillales</taxon>
        <taxon>Streptococcaceae</taxon>
        <taxon>Streptococcus</taxon>
    </lineage>
</organism>
<gene>
    <name evidence="1" type="primary">lgt</name>
    <name type="ordered locus">SEQ_1537</name>
</gene>
<protein>
    <recommendedName>
        <fullName evidence="1">Phosphatidylglycerol--prolipoprotein diacylglyceryl transferase</fullName>
        <ecNumber evidence="1">2.5.1.145</ecNumber>
    </recommendedName>
</protein>
<accession>C0M7Z3</accession>
<dbReference type="EC" id="2.5.1.145" evidence="1"/>
<dbReference type="EMBL" id="FM204883">
    <property type="protein sequence ID" value="CAW94479.1"/>
    <property type="molecule type" value="Genomic_DNA"/>
</dbReference>
<dbReference type="RefSeq" id="WP_012679818.1">
    <property type="nucleotide sequence ID" value="NC_012471.1"/>
</dbReference>
<dbReference type="SMR" id="C0M7Z3"/>
<dbReference type="KEGG" id="seu:SEQ_1537"/>
<dbReference type="HOGENOM" id="CLU_013386_0_1_9"/>
<dbReference type="OrthoDB" id="871140at2"/>
<dbReference type="UniPathway" id="UPA00664"/>
<dbReference type="Proteomes" id="UP000001365">
    <property type="component" value="Chromosome"/>
</dbReference>
<dbReference type="GO" id="GO:0005886">
    <property type="term" value="C:plasma membrane"/>
    <property type="evidence" value="ECO:0007669"/>
    <property type="project" value="UniProtKB-SubCell"/>
</dbReference>
<dbReference type="GO" id="GO:0008961">
    <property type="term" value="F:phosphatidylglycerol-prolipoprotein diacylglyceryl transferase activity"/>
    <property type="evidence" value="ECO:0007669"/>
    <property type="project" value="UniProtKB-UniRule"/>
</dbReference>
<dbReference type="GO" id="GO:0042158">
    <property type="term" value="P:lipoprotein biosynthetic process"/>
    <property type="evidence" value="ECO:0007669"/>
    <property type="project" value="UniProtKB-UniRule"/>
</dbReference>
<dbReference type="HAMAP" id="MF_01147">
    <property type="entry name" value="Lgt"/>
    <property type="match status" value="1"/>
</dbReference>
<dbReference type="InterPro" id="IPR001640">
    <property type="entry name" value="Lgt"/>
</dbReference>
<dbReference type="NCBIfam" id="TIGR00544">
    <property type="entry name" value="lgt"/>
    <property type="match status" value="1"/>
</dbReference>
<dbReference type="PANTHER" id="PTHR30589:SF0">
    <property type="entry name" value="PHOSPHATIDYLGLYCEROL--PROLIPOPROTEIN DIACYLGLYCERYL TRANSFERASE"/>
    <property type="match status" value="1"/>
</dbReference>
<dbReference type="PANTHER" id="PTHR30589">
    <property type="entry name" value="PROLIPOPROTEIN DIACYLGLYCERYL TRANSFERASE"/>
    <property type="match status" value="1"/>
</dbReference>
<dbReference type="Pfam" id="PF01790">
    <property type="entry name" value="LGT"/>
    <property type="match status" value="1"/>
</dbReference>
<dbReference type="PROSITE" id="PS01311">
    <property type="entry name" value="LGT"/>
    <property type="match status" value="1"/>
</dbReference>
<keyword id="KW-1003">Cell membrane</keyword>
<keyword id="KW-0472">Membrane</keyword>
<keyword id="KW-0808">Transferase</keyword>
<keyword id="KW-0812">Transmembrane</keyword>
<keyword id="KW-1133">Transmembrane helix</keyword>
<name>LGT_STRE4</name>